<organism>
    <name type="scientific">Gallus gallus</name>
    <name type="common">Chicken</name>
    <dbReference type="NCBI Taxonomy" id="9031"/>
    <lineage>
        <taxon>Eukaryota</taxon>
        <taxon>Metazoa</taxon>
        <taxon>Chordata</taxon>
        <taxon>Craniata</taxon>
        <taxon>Vertebrata</taxon>
        <taxon>Euteleostomi</taxon>
        <taxon>Archelosauria</taxon>
        <taxon>Archosauria</taxon>
        <taxon>Dinosauria</taxon>
        <taxon>Saurischia</taxon>
        <taxon>Theropoda</taxon>
        <taxon>Coelurosauria</taxon>
        <taxon>Aves</taxon>
        <taxon>Neognathae</taxon>
        <taxon>Galloanserae</taxon>
        <taxon>Galliformes</taxon>
        <taxon>Phasianidae</taxon>
        <taxon>Phasianinae</taxon>
        <taxon>Gallus</taxon>
    </lineage>
</organism>
<feature type="initiator methionine" description="Removed" evidence="7">
    <location>
        <position position="1"/>
    </location>
</feature>
<feature type="chain" id="PRO_0000091005" description="Elongation factor 2">
    <location>
        <begin position="2"/>
        <end position="858"/>
    </location>
</feature>
<feature type="domain" description="tr-type G" evidence="6">
    <location>
        <begin position="17"/>
        <end position="362"/>
    </location>
</feature>
<feature type="binding site" evidence="4">
    <location>
        <begin position="26"/>
        <end position="33"/>
    </location>
    <ligand>
        <name>GTP</name>
        <dbReference type="ChEBI" id="CHEBI:37565"/>
    </ligand>
</feature>
<feature type="binding site" evidence="4">
    <location>
        <begin position="158"/>
        <end position="161"/>
    </location>
    <ligand>
        <name>GTP</name>
        <dbReference type="ChEBI" id="CHEBI:37565"/>
    </ligand>
</feature>
<feature type="binding site" evidence="4">
    <location>
        <begin position="216"/>
        <end position="218"/>
    </location>
    <ligand>
        <name>GTP</name>
        <dbReference type="ChEBI" id="CHEBI:37565"/>
    </ligand>
</feature>
<feature type="modified residue" description="Phosphothreonine" evidence="1">
    <location>
        <position position="57"/>
    </location>
</feature>
<feature type="modified residue" description="Phosphothreonine" evidence="1">
    <location>
        <position position="59"/>
    </location>
</feature>
<feature type="modified residue" description="Diphthamide" evidence="2">
    <location>
        <position position="715"/>
    </location>
</feature>
<keyword id="KW-0002">3D-structure</keyword>
<keyword id="KW-0963">Cytoplasm</keyword>
<keyword id="KW-0903">Direct protein sequencing</keyword>
<keyword id="KW-0251">Elongation factor</keyword>
<keyword id="KW-0342">GTP-binding</keyword>
<keyword id="KW-0378">Hydrolase</keyword>
<keyword id="KW-0547">Nucleotide-binding</keyword>
<keyword id="KW-0539">Nucleus</keyword>
<keyword id="KW-0597">Phosphoprotein</keyword>
<keyword id="KW-0648">Protein biosynthesis</keyword>
<keyword id="KW-1185">Reference proteome</keyword>
<dbReference type="EC" id="3.6.5.-" evidence="3"/>
<dbReference type="EMBL" id="U46663">
    <property type="protein sequence ID" value="AAA87587.1"/>
    <property type="molecule type" value="mRNA"/>
</dbReference>
<dbReference type="RefSeq" id="NP_990699.1">
    <property type="nucleotide sequence ID" value="NM_205368.1"/>
</dbReference>
<dbReference type="PDB" id="8Q87">
    <property type="method" value="EM"/>
    <property type="resolution" value="2.40 A"/>
    <property type="chains" value="A=1-858"/>
</dbReference>
<dbReference type="PDBsum" id="8Q87"/>
<dbReference type="SMR" id="Q90705"/>
<dbReference type="BioGRID" id="676581">
    <property type="interactions" value="1"/>
</dbReference>
<dbReference type="FunCoup" id="Q90705">
    <property type="interactions" value="2573"/>
</dbReference>
<dbReference type="STRING" id="9031.ENSGALP00000055709"/>
<dbReference type="PaxDb" id="9031-ENSGALP00000042519"/>
<dbReference type="GeneID" id="396325"/>
<dbReference type="KEGG" id="gga:396325"/>
<dbReference type="CTD" id="1938"/>
<dbReference type="VEuPathDB" id="HostDB:geneid_396325"/>
<dbReference type="eggNOG" id="KOG0469">
    <property type="taxonomic scope" value="Eukaryota"/>
</dbReference>
<dbReference type="InParanoid" id="Q90705"/>
<dbReference type="OrthoDB" id="364892at2759"/>
<dbReference type="PhylomeDB" id="Q90705"/>
<dbReference type="PRO" id="PR:Q90705"/>
<dbReference type="Proteomes" id="UP000000539">
    <property type="component" value="Unassembled WGS sequence"/>
</dbReference>
<dbReference type="GO" id="GO:0005737">
    <property type="term" value="C:cytoplasm"/>
    <property type="evidence" value="ECO:0000250"/>
    <property type="project" value="UniProtKB"/>
</dbReference>
<dbReference type="GO" id="GO:0005829">
    <property type="term" value="C:cytosol"/>
    <property type="evidence" value="ECO:0000318"/>
    <property type="project" value="GO_Central"/>
</dbReference>
<dbReference type="GO" id="GO:0005634">
    <property type="term" value="C:nucleus"/>
    <property type="evidence" value="ECO:0007669"/>
    <property type="project" value="UniProtKB-SubCell"/>
</dbReference>
<dbReference type="GO" id="GO:1990904">
    <property type="term" value="C:ribonucleoprotein complex"/>
    <property type="evidence" value="ECO:0000318"/>
    <property type="project" value="GO_Central"/>
</dbReference>
<dbReference type="GO" id="GO:0005525">
    <property type="term" value="F:GTP binding"/>
    <property type="evidence" value="ECO:0007669"/>
    <property type="project" value="UniProtKB-KW"/>
</dbReference>
<dbReference type="GO" id="GO:0003924">
    <property type="term" value="F:GTPase activity"/>
    <property type="evidence" value="ECO:0000250"/>
    <property type="project" value="UniProtKB"/>
</dbReference>
<dbReference type="GO" id="GO:0043022">
    <property type="term" value="F:ribosome binding"/>
    <property type="evidence" value="ECO:0000318"/>
    <property type="project" value="GO_Central"/>
</dbReference>
<dbReference type="GO" id="GO:0003746">
    <property type="term" value="F:translation elongation factor activity"/>
    <property type="evidence" value="ECO:0000250"/>
    <property type="project" value="UniProtKB"/>
</dbReference>
<dbReference type="GO" id="GO:0006414">
    <property type="term" value="P:translational elongation"/>
    <property type="evidence" value="ECO:0000250"/>
    <property type="project" value="UniProtKB"/>
</dbReference>
<dbReference type="CDD" id="cd01681">
    <property type="entry name" value="aeEF2_snRNP_like_IV"/>
    <property type="match status" value="1"/>
</dbReference>
<dbReference type="CDD" id="cd04096">
    <property type="entry name" value="eEF2_snRNP_like_C"/>
    <property type="match status" value="1"/>
</dbReference>
<dbReference type="CDD" id="cd01885">
    <property type="entry name" value="EF2"/>
    <property type="match status" value="1"/>
</dbReference>
<dbReference type="CDD" id="cd16261">
    <property type="entry name" value="EF2_snRNP_III"/>
    <property type="match status" value="1"/>
</dbReference>
<dbReference type="CDD" id="cd03700">
    <property type="entry name" value="EF2_snRNP_like_II"/>
    <property type="match status" value="1"/>
</dbReference>
<dbReference type="FunFam" id="2.40.30.10:FF:000010">
    <property type="entry name" value="Translation elongation factor 2"/>
    <property type="match status" value="1"/>
</dbReference>
<dbReference type="FunFam" id="3.30.230.10:FF:000006">
    <property type="entry name" value="Translation elongation factor 2"/>
    <property type="match status" value="1"/>
</dbReference>
<dbReference type="FunFam" id="3.30.70.240:FF:000003">
    <property type="entry name" value="Translation elongation factor 2"/>
    <property type="match status" value="1"/>
</dbReference>
<dbReference type="FunFam" id="3.30.70.870:FF:000002">
    <property type="entry name" value="Translation elongation factor 2"/>
    <property type="match status" value="1"/>
</dbReference>
<dbReference type="FunFam" id="3.40.50.300:FF:000058">
    <property type="entry name" value="Translation elongation factor 2"/>
    <property type="match status" value="1"/>
</dbReference>
<dbReference type="Gene3D" id="3.30.230.10">
    <property type="match status" value="1"/>
</dbReference>
<dbReference type="Gene3D" id="3.30.70.240">
    <property type="match status" value="1"/>
</dbReference>
<dbReference type="Gene3D" id="3.30.70.870">
    <property type="entry name" value="Elongation Factor G (Translational Gtpase), domain 3"/>
    <property type="match status" value="1"/>
</dbReference>
<dbReference type="Gene3D" id="3.40.50.300">
    <property type="entry name" value="P-loop containing nucleotide triphosphate hydrolases"/>
    <property type="match status" value="1"/>
</dbReference>
<dbReference type="Gene3D" id="2.40.30.10">
    <property type="entry name" value="Translation factors"/>
    <property type="match status" value="1"/>
</dbReference>
<dbReference type="InterPro" id="IPR041095">
    <property type="entry name" value="EFG_II"/>
</dbReference>
<dbReference type="InterPro" id="IPR035647">
    <property type="entry name" value="EFG_III/V"/>
</dbReference>
<dbReference type="InterPro" id="IPR000640">
    <property type="entry name" value="EFG_V-like"/>
</dbReference>
<dbReference type="InterPro" id="IPR004161">
    <property type="entry name" value="EFTu-like_2"/>
</dbReference>
<dbReference type="InterPro" id="IPR031157">
    <property type="entry name" value="G_TR_CS"/>
</dbReference>
<dbReference type="InterPro" id="IPR027417">
    <property type="entry name" value="P-loop_NTPase"/>
</dbReference>
<dbReference type="InterPro" id="IPR020568">
    <property type="entry name" value="Ribosomal_Su5_D2-typ_SF"/>
</dbReference>
<dbReference type="InterPro" id="IPR014721">
    <property type="entry name" value="Ribsml_uS5_D2-typ_fold_subgr"/>
</dbReference>
<dbReference type="InterPro" id="IPR005225">
    <property type="entry name" value="Small_GTP-bd"/>
</dbReference>
<dbReference type="InterPro" id="IPR000795">
    <property type="entry name" value="T_Tr_GTP-bd_dom"/>
</dbReference>
<dbReference type="InterPro" id="IPR009000">
    <property type="entry name" value="Transl_B-barrel_sf"/>
</dbReference>
<dbReference type="InterPro" id="IPR005517">
    <property type="entry name" value="Transl_elong_EFG/EF2_IV"/>
</dbReference>
<dbReference type="NCBIfam" id="TIGR00231">
    <property type="entry name" value="small_GTP"/>
    <property type="match status" value="1"/>
</dbReference>
<dbReference type="PANTHER" id="PTHR42908:SF35">
    <property type="entry name" value="ELONGATION FACTOR 2"/>
    <property type="match status" value="1"/>
</dbReference>
<dbReference type="PANTHER" id="PTHR42908">
    <property type="entry name" value="TRANSLATION ELONGATION FACTOR-RELATED"/>
    <property type="match status" value="1"/>
</dbReference>
<dbReference type="Pfam" id="PF00679">
    <property type="entry name" value="EFG_C"/>
    <property type="match status" value="1"/>
</dbReference>
<dbReference type="Pfam" id="PF14492">
    <property type="entry name" value="EFG_III"/>
    <property type="match status" value="1"/>
</dbReference>
<dbReference type="Pfam" id="PF03764">
    <property type="entry name" value="EFG_IV"/>
    <property type="match status" value="1"/>
</dbReference>
<dbReference type="Pfam" id="PF00009">
    <property type="entry name" value="GTP_EFTU"/>
    <property type="match status" value="1"/>
</dbReference>
<dbReference type="Pfam" id="PF03144">
    <property type="entry name" value="GTP_EFTU_D2"/>
    <property type="match status" value="1"/>
</dbReference>
<dbReference type="PRINTS" id="PR00315">
    <property type="entry name" value="ELONGATNFCT"/>
</dbReference>
<dbReference type="SMART" id="SM00838">
    <property type="entry name" value="EFG_C"/>
    <property type="match status" value="1"/>
</dbReference>
<dbReference type="SMART" id="SM00889">
    <property type="entry name" value="EFG_IV"/>
    <property type="match status" value="1"/>
</dbReference>
<dbReference type="SUPFAM" id="SSF54980">
    <property type="entry name" value="EF-G C-terminal domain-like"/>
    <property type="match status" value="2"/>
</dbReference>
<dbReference type="SUPFAM" id="SSF52540">
    <property type="entry name" value="P-loop containing nucleoside triphosphate hydrolases"/>
    <property type="match status" value="1"/>
</dbReference>
<dbReference type="SUPFAM" id="SSF54211">
    <property type="entry name" value="Ribosomal protein S5 domain 2-like"/>
    <property type="match status" value="1"/>
</dbReference>
<dbReference type="SUPFAM" id="SSF50447">
    <property type="entry name" value="Translation proteins"/>
    <property type="match status" value="1"/>
</dbReference>
<dbReference type="PROSITE" id="PS00301">
    <property type="entry name" value="G_TR_1"/>
    <property type="match status" value="1"/>
</dbReference>
<dbReference type="PROSITE" id="PS51722">
    <property type="entry name" value="G_TR_2"/>
    <property type="match status" value="1"/>
</dbReference>
<name>EF2_CHICK</name>
<reference key="1">
    <citation type="journal article" date="1993" name="Mol. Cells">
        <title>Molecular cloning of chicken elongation factor 2 (EF-2): sequence comparison with mammalian EF-2 and its expression in the early developmental stages of the embryos.</title>
        <authorList>
            <person name="Kim C.W."/>
            <person name="Jung E.J."/>
            <person name="Ahn H.J."/>
            <person name="Kim J.C."/>
            <person name="Kang K.R."/>
            <person name="Eom M.-O."/>
            <person name="Kim Y.W."/>
            <person name="Kang Y.-S."/>
        </authorList>
    </citation>
    <scope>NUCLEOTIDE SEQUENCE [MRNA]</scope>
    <source>
        <tissue>Intestine</tissue>
    </source>
</reference>
<reference key="2">
    <citation type="journal article" date="1991" name="Biochem. Biophys. Res. Commun.">
        <title>Elongation factor-2 in chick embryo is phosphorylated on tyrosine as well as serine and threonine.</title>
        <authorList>
            <person name="Kim Y.W."/>
            <person name="Kim C.W."/>
            <person name="Kang K.R."/>
            <person name="Byun S.M."/>
            <person name="Kang Y.S."/>
        </authorList>
    </citation>
    <scope>PROTEIN SEQUENCE OF 2-22</scope>
    <scope>PHOSPHORYLATION</scope>
</reference>
<protein>
    <recommendedName>
        <fullName>Elongation factor 2</fullName>
        <shortName>EF-2</shortName>
        <ecNumber evidence="3">3.6.5.-</ecNumber>
    </recommendedName>
</protein>
<evidence type="ECO:0000250" key="1"/>
<evidence type="ECO:0000250" key="2">
    <source>
        <dbReference type="UniProtKB" id="P05197"/>
    </source>
</evidence>
<evidence type="ECO:0000250" key="3">
    <source>
        <dbReference type="UniProtKB" id="P13639"/>
    </source>
</evidence>
<evidence type="ECO:0000250" key="4">
    <source>
        <dbReference type="UniProtKB" id="P32324"/>
    </source>
</evidence>
<evidence type="ECO:0000250" key="5">
    <source>
        <dbReference type="UniProtKB" id="Q7ZXP8"/>
    </source>
</evidence>
<evidence type="ECO:0000255" key="6">
    <source>
        <dbReference type="PROSITE-ProRule" id="PRU01059"/>
    </source>
</evidence>
<evidence type="ECO:0000269" key="7">
    <source>
    </source>
</evidence>
<proteinExistence type="evidence at protein level"/>
<comment type="function">
    <text evidence="3">Catalyzes the GTP-dependent ribosomal translocation step during translation elongation. During this step, the ribosome changes from the pre-translocational (PRE) to the post-translocational (POST) state as the newly formed A-site-bound peptidyl-tRNA and P-site-bound deacylated tRNA move to the P and E sites, respectively. Catalyzes the coordinated movement of the two tRNA molecules, the mRNA and conformational changes in the ribosome.</text>
</comment>
<comment type="catalytic activity">
    <reaction evidence="3">
        <text>GTP + H2O = GDP + phosphate + H(+)</text>
        <dbReference type="Rhea" id="RHEA:19669"/>
        <dbReference type="ChEBI" id="CHEBI:15377"/>
        <dbReference type="ChEBI" id="CHEBI:15378"/>
        <dbReference type="ChEBI" id="CHEBI:37565"/>
        <dbReference type="ChEBI" id="CHEBI:43474"/>
        <dbReference type="ChEBI" id="CHEBI:58189"/>
    </reaction>
    <physiologicalReaction direction="left-to-right" evidence="3">
        <dbReference type="Rhea" id="RHEA:19670"/>
    </physiologicalReaction>
</comment>
<comment type="subunit">
    <text evidence="3 5">Binds to 80S ribosomes (By similarity). Actively translating ribosomes show mutually exclusive binding of eIF5a (EIF5A or EIF5A2) and EEF2/eEF2 (By similarity). Interacts with SERBP1; interaction sequesters EEF2/eEF2 at the A-site of the ribosome, thereby blocking the interaction sites of the mRNA-tRNA complex, promoting ribosome stabilization and hibernation (By similarity). Interacts with HABP4; interaction takes place at the A-site of hibernating ribosomes and promotes ribosome stabilization (By similarity).</text>
</comment>
<comment type="subcellular location">
    <subcellularLocation>
        <location evidence="3">Cytoplasm</location>
    </subcellularLocation>
    <subcellularLocation>
        <location evidence="3">Nucleus</location>
    </subcellularLocation>
</comment>
<comment type="PTM">
    <text evidence="1">Phosphorylation by EF-2 kinase completely inactivates EF-2.</text>
</comment>
<comment type="PTM">
    <text evidence="2">Diphthamide is 2-[3-carboxyamido-3-(trimethyl-ammonio)propyl]histidine (By similarity).</text>
</comment>
<comment type="similarity">
    <text evidence="6">Belongs to the TRAFAC class translation factor GTPase superfamily. Classic translation factor GTPase family. EF-G/EF-2 subfamily.</text>
</comment>
<gene>
    <name type="primary">EEF2</name>
</gene>
<sequence length="858" mass="95378">MVNFTVDQIRAIMDKKANIRNMSVIAHVDHGKSTLTDSLVCKAGIIASARAGETRFTDTRKDEQERCITIKSTAISLFYELSENDLAFIKQSKDGSGFLINLIDSPGHVDFSSEVTAALRVTDGALVVVDCVSGVCVQTETVLRQAIAERIKPVLMMNKMDRALLELQLDPEELYQTFQRIVENVNVIISTYGEGESGPMGNIMIDPVLGTVGFGSGLHGWAFTLKQFAEMYVAKFAAKGDAQMNPTERAKKVEDMMKKLWGDRYFDPATGKFSKSATGPDGKKLPRTFCQLILDPIFKVFDAIMTFKKEEAAKLIEKLDIKLDSEDKDKEGKPLLKAVMRRWLPAGDALLQMITIHLPSPVTAQKYRCELLYEGPPDDEAAIGIKNCDPRGSLMMYISKMVPTSDKGRFYAFGRVFSGLVSTGLKVRIMGPNYTPGKKEDLYLKPIQRTILMMGRYVEPIEDVPCGNIVGLVGVDQFLVKTGTITTFEHAHNMRVMKFSVSPVVRVAVEAKNPADLPKLVEGLKRLAKSDPMVQCIIEESGEHIIAGAGELHLEICLKDLEEDHACIPIKKSDPVVSYRETVSEESNVMCLSKSPNKHNRLYMKARPFPDGLAEDIDKGEVSARQELKQRARYLAEKYEWDVTEARKIWCFGPDGTGPNILTDITKGVQYLNEIKDSVVAGFQWATKEGVLCEENMRGVRFDVHDVTLHADAIHRGGGQIIPTARRCLYACVLTAQPRLMEPIYLVEIQCPEQVVGGIYGVLNRKRGHVFEESQVAGTPMFVVKAYLPVNESFGFTADLRSNTGGQAFPQCVFDHWQILPGDPFDSASRPSQVVAETRKRKGLKEGIPALDNFLDKL</sequence>
<accession>Q90705</accession>